<evidence type="ECO:0000255" key="1">
    <source>
        <dbReference type="HAMAP-Rule" id="MF_00445"/>
    </source>
</evidence>
<name>NUON_TRIL1</name>
<proteinExistence type="inferred from homology"/>
<gene>
    <name evidence="1" type="primary">nuoN</name>
    <name type="ordered locus">Glov_3125</name>
</gene>
<sequence>MDINVAQLFQTINLNVIMPEVILSVLGMALLLVNVFVPSKSKGYLAWLSLIGIVGAGFAAVTGWGTTVSSFSDSVVLDNFAIFFKIIFLLAAGLAVLISDQYMSREECNHGELYPIILFTTVGMMLMAAATDLMTIFLGLELMSISLYVLAGFNRDSIKSNEAGMKYFLLGAFSTGFLLYGMALIYGVTGTTRVAKIASLVTQVGGASNTMLLIGMFLMLTGFLFKIAAAPFHMWTPDVYEGAPTPMTAFMSAGPKAAGFAAMLRLLLVAFPAMIADWSDLLWILAVLTMTVGNFTALRQDNIKRMLAYSSIAHAGYCLVGFASGTATGTSGILFYMLSYTFMNIGAFAVIVLVGKKGEPNGTVMDYAGLGHKRPLLALAMTVFMFSLAGMPPTAGFIGKFYLFSGAVQAGYIWLAIIGVLNSAASVYYYLRVIVYMYFKPGEEEFDWFNVTAPVALALVVSAAGSLIPGIIPSMILQFAQQAVKLI</sequence>
<keyword id="KW-0997">Cell inner membrane</keyword>
<keyword id="KW-1003">Cell membrane</keyword>
<keyword id="KW-0472">Membrane</keyword>
<keyword id="KW-0520">NAD</keyword>
<keyword id="KW-0874">Quinone</keyword>
<keyword id="KW-1185">Reference proteome</keyword>
<keyword id="KW-1278">Translocase</keyword>
<keyword id="KW-0812">Transmembrane</keyword>
<keyword id="KW-1133">Transmembrane helix</keyword>
<keyword id="KW-0813">Transport</keyword>
<keyword id="KW-0830">Ubiquinone</keyword>
<accession>B3E9V6</accession>
<reference key="1">
    <citation type="submission" date="2008-05" db="EMBL/GenBank/DDBJ databases">
        <title>Complete sequence of chromosome of Geobacter lovleyi SZ.</title>
        <authorList>
            <consortium name="US DOE Joint Genome Institute"/>
            <person name="Lucas S."/>
            <person name="Copeland A."/>
            <person name="Lapidus A."/>
            <person name="Glavina del Rio T."/>
            <person name="Dalin E."/>
            <person name="Tice H."/>
            <person name="Bruce D."/>
            <person name="Goodwin L."/>
            <person name="Pitluck S."/>
            <person name="Chertkov O."/>
            <person name="Meincke L."/>
            <person name="Brettin T."/>
            <person name="Detter J.C."/>
            <person name="Han C."/>
            <person name="Tapia R."/>
            <person name="Kuske C.R."/>
            <person name="Schmutz J."/>
            <person name="Larimer F."/>
            <person name="Land M."/>
            <person name="Hauser L."/>
            <person name="Kyrpides N."/>
            <person name="Mikhailova N."/>
            <person name="Sung Y."/>
            <person name="Fletcher K.E."/>
            <person name="Ritalahti K.M."/>
            <person name="Loeffler F.E."/>
            <person name="Richardson P."/>
        </authorList>
    </citation>
    <scope>NUCLEOTIDE SEQUENCE [LARGE SCALE GENOMIC DNA]</scope>
    <source>
        <strain>ATCC BAA-1151 / DSM 17278 / SZ</strain>
    </source>
</reference>
<dbReference type="EC" id="7.1.1.-" evidence="1"/>
<dbReference type="EMBL" id="CP001089">
    <property type="protein sequence ID" value="ACD96831.1"/>
    <property type="molecule type" value="Genomic_DNA"/>
</dbReference>
<dbReference type="RefSeq" id="WP_012471155.1">
    <property type="nucleotide sequence ID" value="NC_010814.1"/>
</dbReference>
<dbReference type="SMR" id="B3E9V6"/>
<dbReference type="STRING" id="398767.Glov_3125"/>
<dbReference type="KEGG" id="glo:Glov_3125"/>
<dbReference type="eggNOG" id="COG1007">
    <property type="taxonomic scope" value="Bacteria"/>
</dbReference>
<dbReference type="HOGENOM" id="CLU_007100_1_5_7"/>
<dbReference type="OrthoDB" id="9805769at2"/>
<dbReference type="Proteomes" id="UP000002420">
    <property type="component" value="Chromosome"/>
</dbReference>
<dbReference type="GO" id="GO:0005886">
    <property type="term" value="C:plasma membrane"/>
    <property type="evidence" value="ECO:0007669"/>
    <property type="project" value="UniProtKB-SubCell"/>
</dbReference>
<dbReference type="GO" id="GO:0008137">
    <property type="term" value="F:NADH dehydrogenase (ubiquinone) activity"/>
    <property type="evidence" value="ECO:0007669"/>
    <property type="project" value="InterPro"/>
</dbReference>
<dbReference type="GO" id="GO:0050136">
    <property type="term" value="F:NADH:ubiquinone reductase (non-electrogenic) activity"/>
    <property type="evidence" value="ECO:0007669"/>
    <property type="project" value="UniProtKB-UniRule"/>
</dbReference>
<dbReference type="GO" id="GO:0048038">
    <property type="term" value="F:quinone binding"/>
    <property type="evidence" value="ECO:0007669"/>
    <property type="project" value="UniProtKB-KW"/>
</dbReference>
<dbReference type="GO" id="GO:0042773">
    <property type="term" value="P:ATP synthesis coupled electron transport"/>
    <property type="evidence" value="ECO:0007669"/>
    <property type="project" value="InterPro"/>
</dbReference>
<dbReference type="HAMAP" id="MF_00445">
    <property type="entry name" value="NDH1_NuoN_1"/>
    <property type="match status" value="1"/>
</dbReference>
<dbReference type="InterPro" id="IPR010096">
    <property type="entry name" value="NADH-Q_OxRdtase_suN/2"/>
</dbReference>
<dbReference type="InterPro" id="IPR001750">
    <property type="entry name" value="ND/Mrp_TM"/>
</dbReference>
<dbReference type="NCBIfam" id="TIGR01770">
    <property type="entry name" value="NDH_I_N"/>
    <property type="match status" value="1"/>
</dbReference>
<dbReference type="PANTHER" id="PTHR22773">
    <property type="entry name" value="NADH DEHYDROGENASE"/>
    <property type="match status" value="1"/>
</dbReference>
<dbReference type="Pfam" id="PF00361">
    <property type="entry name" value="Proton_antipo_M"/>
    <property type="match status" value="1"/>
</dbReference>
<dbReference type="PRINTS" id="PR01434">
    <property type="entry name" value="NADHDHGNASE5"/>
</dbReference>
<protein>
    <recommendedName>
        <fullName evidence="1">NADH-quinone oxidoreductase subunit N</fullName>
        <ecNumber evidence="1">7.1.1.-</ecNumber>
    </recommendedName>
    <alternativeName>
        <fullName evidence="1">NADH dehydrogenase I subunit N</fullName>
    </alternativeName>
    <alternativeName>
        <fullName evidence="1">NDH-1 subunit N</fullName>
    </alternativeName>
</protein>
<comment type="function">
    <text evidence="1">NDH-1 shuttles electrons from NADH, via FMN and iron-sulfur (Fe-S) centers, to quinones in the respiratory chain. The immediate electron acceptor for the enzyme in this species is believed to be ubiquinone. Couples the redox reaction to proton translocation (for every two electrons transferred, four hydrogen ions are translocated across the cytoplasmic membrane), and thus conserves the redox energy in a proton gradient.</text>
</comment>
<comment type="catalytic activity">
    <reaction evidence="1">
        <text>a quinone + NADH + 5 H(+)(in) = a quinol + NAD(+) + 4 H(+)(out)</text>
        <dbReference type="Rhea" id="RHEA:57888"/>
        <dbReference type="ChEBI" id="CHEBI:15378"/>
        <dbReference type="ChEBI" id="CHEBI:24646"/>
        <dbReference type="ChEBI" id="CHEBI:57540"/>
        <dbReference type="ChEBI" id="CHEBI:57945"/>
        <dbReference type="ChEBI" id="CHEBI:132124"/>
    </reaction>
</comment>
<comment type="subunit">
    <text evidence="1">NDH-1 is composed of 14 different subunits. Subunits NuoA, H, J, K, L, M, N constitute the membrane sector of the complex.</text>
</comment>
<comment type="subcellular location">
    <subcellularLocation>
        <location evidence="1">Cell inner membrane</location>
        <topology evidence="1">Multi-pass membrane protein</topology>
    </subcellularLocation>
</comment>
<comment type="similarity">
    <text evidence="1">Belongs to the complex I subunit 2 family.</text>
</comment>
<organism>
    <name type="scientific">Trichlorobacter lovleyi (strain ATCC BAA-1151 / DSM 17278 / SZ)</name>
    <name type="common">Geobacter lovleyi</name>
    <dbReference type="NCBI Taxonomy" id="398767"/>
    <lineage>
        <taxon>Bacteria</taxon>
        <taxon>Pseudomonadati</taxon>
        <taxon>Thermodesulfobacteriota</taxon>
        <taxon>Desulfuromonadia</taxon>
        <taxon>Geobacterales</taxon>
        <taxon>Geobacteraceae</taxon>
        <taxon>Trichlorobacter</taxon>
    </lineage>
</organism>
<feature type="chain" id="PRO_0000391152" description="NADH-quinone oxidoreductase subunit N">
    <location>
        <begin position="1"/>
        <end position="487"/>
    </location>
</feature>
<feature type="transmembrane region" description="Helical" evidence="1">
    <location>
        <begin position="16"/>
        <end position="36"/>
    </location>
</feature>
<feature type="transmembrane region" description="Helical" evidence="1">
    <location>
        <begin position="45"/>
        <end position="65"/>
    </location>
</feature>
<feature type="transmembrane region" description="Helical" evidence="1">
    <location>
        <begin position="79"/>
        <end position="99"/>
    </location>
</feature>
<feature type="transmembrane region" description="Helical" evidence="1">
    <location>
        <begin position="111"/>
        <end position="131"/>
    </location>
</feature>
<feature type="transmembrane region" description="Helical" evidence="1">
    <location>
        <begin position="133"/>
        <end position="153"/>
    </location>
</feature>
<feature type="transmembrane region" description="Helical" evidence="1">
    <location>
        <begin position="168"/>
        <end position="188"/>
    </location>
</feature>
<feature type="transmembrane region" description="Helical" evidence="1">
    <location>
        <begin position="212"/>
        <end position="232"/>
    </location>
</feature>
<feature type="transmembrane region" description="Helical" evidence="1">
    <location>
        <begin position="257"/>
        <end position="276"/>
    </location>
</feature>
<feature type="transmembrane region" description="Helical" evidence="1">
    <location>
        <begin position="281"/>
        <end position="298"/>
    </location>
</feature>
<feature type="transmembrane region" description="Helical" evidence="1">
    <location>
        <begin position="306"/>
        <end position="326"/>
    </location>
</feature>
<feature type="transmembrane region" description="Helical" evidence="1">
    <location>
        <begin position="333"/>
        <end position="353"/>
    </location>
</feature>
<feature type="transmembrane region" description="Helical" evidence="1">
    <location>
        <begin position="378"/>
        <end position="398"/>
    </location>
</feature>
<feature type="transmembrane region" description="Helical" evidence="1">
    <location>
        <begin position="413"/>
        <end position="435"/>
    </location>
</feature>
<feature type="transmembrane region" description="Helical" evidence="1">
    <location>
        <begin position="457"/>
        <end position="477"/>
    </location>
</feature>